<proteinExistence type="inferred from homology"/>
<comment type="similarity">
    <text evidence="1">Belongs to the UPF0180 family.</text>
</comment>
<name>Y5144_BACLD</name>
<organism>
    <name type="scientific">Bacillus licheniformis (strain ATCC 14580 / DSM 13 / JCM 2505 / CCUG 7422 / NBRC 12200 / NCIMB 9375 / NCTC 10341 / NRRL NRS-1264 / Gibson 46)</name>
    <dbReference type="NCBI Taxonomy" id="279010"/>
    <lineage>
        <taxon>Bacteria</taxon>
        <taxon>Bacillati</taxon>
        <taxon>Bacillota</taxon>
        <taxon>Bacilli</taxon>
        <taxon>Bacillales</taxon>
        <taxon>Bacillaceae</taxon>
        <taxon>Bacillus</taxon>
    </lineage>
</organism>
<feature type="chain" id="PRO_0000258530" description="UPF0180 protein BLi01634/BL05144">
    <location>
        <begin position="1"/>
        <end position="81"/>
    </location>
</feature>
<accession>Q65K83</accession>
<accession>Q62VN5</accession>
<dbReference type="EMBL" id="AE017333">
    <property type="protein sequence ID" value="AAU40531.1"/>
    <property type="molecule type" value="Genomic_DNA"/>
</dbReference>
<dbReference type="EMBL" id="CP000002">
    <property type="protein sequence ID" value="AAU23173.1"/>
    <property type="molecule type" value="Genomic_DNA"/>
</dbReference>
<dbReference type="RefSeq" id="WP_003181323.1">
    <property type="nucleotide sequence ID" value="NC_006322.1"/>
</dbReference>
<dbReference type="STRING" id="279010.BL05144"/>
<dbReference type="KEGG" id="bld:BLi01634"/>
<dbReference type="KEGG" id="bli:BL05144"/>
<dbReference type="eggNOG" id="ENOG503307C">
    <property type="taxonomic scope" value="Bacteria"/>
</dbReference>
<dbReference type="HOGENOM" id="CLU_187365_0_0_9"/>
<dbReference type="Proteomes" id="UP000000606">
    <property type="component" value="Chromosome"/>
</dbReference>
<dbReference type="HAMAP" id="MF_00506">
    <property type="entry name" value="UPF0180"/>
    <property type="match status" value="1"/>
</dbReference>
<dbReference type="InterPro" id="IPR005370">
    <property type="entry name" value="UPF0180"/>
</dbReference>
<dbReference type="NCBIfam" id="NF002845">
    <property type="entry name" value="PRK03094.1"/>
    <property type="match status" value="1"/>
</dbReference>
<dbReference type="Pfam" id="PF03698">
    <property type="entry name" value="UPF0180"/>
    <property type="match status" value="1"/>
</dbReference>
<evidence type="ECO:0000255" key="1">
    <source>
        <dbReference type="HAMAP-Rule" id="MF_00506"/>
    </source>
</evidence>
<protein>
    <recommendedName>
        <fullName evidence="1">UPF0180 protein BLi01634/BL05144</fullName>
    </recommendedName>
</protein>
<reference key="1">
    <citation type="journal article" date="2004" name="J. Mol. Microbiol. Biotechnol.">
        <title>The complete genome sequence of Bacillus licheniformis DSM13, an organism with great industrial potential.</title>
        <authorList>
            <person name="Veith B."/>
            <person name="Herzberg C."/>
            <person name="Steckel S."/>
            <person name="Feesche J."/>
            <person name="Maurer K.H."/>
            <person name="Ehrenreich P."/>
            <person name="Baeumer S."/>
            <person name="Henne A."/>
            <person name="Liesegang H."/>
            <person name="Merkl R."/>
            <person name="Ehrenreich A."/>
            <person name="Gottschalk G."/>
        </authorList>
    </citation>
    <scope>NUCLEOTIDE SEQUENCE [LARGE SCALE GENOMIC DNA]</scope>
    <source>
        <strain>ATCC 14580 / DSM 13 / JCM 2505 / CCUG 7422 / NBRC 12200 / NCIMB 9375 / NCTC 10341 / NRRL NRS-1264 / Gibson 46</strain>
    </source>
</reference>
<reference key="2">
    <citation type="journal article" date="2004" name="Genome Biol.">
        <title>Complete genome sequence of the industrial bacterium Bacillus licheniformis and comparisons with closely related Bacillus species.</title>
        <authorList>
            <person name="Rey M.W."/>
            <person name="Ramaiya P."/>
            <person name="Nelson B.A."/>
            <person name="Brody-Karpin S.D."/>
            <person name="Zaretsky E.J."/>
            <person name="Tang M."/>
            <person name="Lopez de Leon A."/>
            <person name="Xiang H."/>
            <person name="Gusti V."/>
            <person name="Clausen I.G."/>
            <person name="Olsen P.B."/>
            <person name="Rasmussen M.D."/>
            <person name="Andersen J.T."/>
            <person name="Joergensen P.L."/>
            <person name="Larsen T.S."/>
            <person name="Sorokin A."/>
            <person name="Bolotin A."/>
            <person name="Lapidus A."/>
            <person name="Galleron N."/>
            <person name="Ehrlich S.D."/>
            <person name="Berka R.M."/>
        </authorList>
    </citation>
    <scope>NUCLEOTIDE SEQUENCE [LARGE SCALE GENOMIC DNA]</scope>
    <source>
        <strain>ATCC 14580 / DSM 13 / JCM 2505 / CCUG 7422 / NBRC 12200 / NCIMB 9375 / NCTC 10341 / NRRL NRS-1264 / Gibson 46</strain>
    </source>
</reference>
<keyword id="KW-1185">Reference proteome</keyword>
<sequence length="81" mass="8618">MSKKIGIEQSLSDVEAALKEKGYEVVTMKTEDDAKGCDCCVVTGLDTDMLGISDTMTGASVIQATGLTADEICQQVEQKLQ</sequence>
<gene>
    <name type="ordered locus">BLi01634</name>
    <name type="ordered locus">BL05144</name>
</gene>